<comment type="function">
    <text evidence="1">Part of the ABC transporter complex ZnuABC involved in zinc import. Responsible for energy coupling to the transport system.</text>
</comment>
<comment type="catalytic activity">
    <reaction evidence="1">
        <text>Zn(2+)(out) + ATP(in) + H2O(in) = Zn(2+)(in) + ADP(in) + phosphate(in) + H(+)(in)</text>
        <dbReference type="Rhea" id="RHEA:29795"/>
        <dbReference type="ChEBI" id="CHEBI:15377"/>
        <dbReference type="ChEBI" id="CHEBI:15378"/>
        <dbReference type="ChEBI" id="CHEBI:29105"/>
        <dbReference type="ChEBI" id="CHEBI:30616"/>
        <dbReference type="ChEBI" id="CHEBI:43474"/>
        <dbReference type="ChEBI" id="CHEBI:456216"/>
        <dbReference type="EC" id="7.2.2.20"/>
    </reaction>
</comment>
<comment type="subunit">
    <text evidence="1">The complex is composed of two ATP-binding proteins (ZnuC), two transmembrane proteins (ZnuB) and a solute-binding protein (ZnuA).</text>
</comment>
<comment type="subcellular location">
    <subcellularLocation>
        <location evidence="1">Cell inner membrane</location>
        <topology evidence="1">Peripheral membrane protein</topology>
    </subcellularLocation>
</comment>
<comment type="similarity">
    <text evidence="1">Belongs to the ABC transporter superfamily. Zinc importer (TC 3.A.1.15.5) family.</text>
</comment>
<comment type="sequence caution" evidence="2">
    <conflict type="erroneous initiation">
        <sequence resource="EMBL-CDS" id="AAZ68296"/>
    </conflict>
</comment>
<protein>
    <recommendedName>
        <fullName evidence="1">Zinc import ATP-binding protein ZnuC</fullName>
        <ecNumber evidence="1">7.2.2.20</ecNumber>
    </recommendedName>
</protein>
<accession>Q3YSK9</accession>
<reference key="1">
    <citation type="journal article" date="2006" name="J. Bacteriol.">
        <title>The genome of the obligately intracellular bacterium Ehrlichia canis reveals themes of complex membrane structure and immune evasion strategies.</title>
        <authorList>
            <person name="Mavromatis K."/>
            <person name="Doyle C.K."/>
            <person name="Lykidis A."/>
            <person name="Ivanova N."/>
            <person name="Francino M.P."/>
            <person name="Chain P."/>
            <person name="Shin M."/>
            <person name="Malfatti S."/>
            <person name="Larimer F."/>
            <person name="Copeland A."/>
            <person name="Detter J.C."/>
            <person name="Land M."/>
            <person name="Richardson P.M."/>
            <person name="Yu X.J."/>
            <person name="Walker D.H."/>
            <person name="McBride J.W."/>
            <person name="Kyrpides N.C."/>
        </authorList>
    </citation>
    <scope>NUCLEOTIDE SEQUENCE [LARGE SCALE GENOMIC DNA]</scope>
    <source>
        <strain>Jake</strain>
    </source>
</reference>
<organism>
    <name type="scientific">Ehrlichia canis (strain Jake)</name>
    <dbReference type="NCBI Taxonomy" id="269484"/>
    <lineage>
        <taxon>Bacteria</taxon>
        <taxon>Pseudomonadati</taxon>
        <taxon>Pseudomonadota</taxon>
        <taxon>Alphaproteobacteria</taxon>
        <taxon>Rickettsiales</taxon>
        <taxon>Anaplasmataceae</taxon>
        <taxon>Ehrlichia</taxon>
    </lineage>
</organism>
<dbReference type="EC" id="7.2.2.20" evidence="1"/>
<dbReference type="EMBL" id="CP000107">
    <property type="protein sequence ID" value="AAZ68296.1"/>
    <property type="status" value="ALT_INIT"/>
    <property type="molecule type" value="Genomic_DNA"/>
</dbReference>
<dbReference type="RefSeq" id="WP_044261955.1">
    <property type="nucleotide sequence ID" value="NC_007354.1"/>
</dbReference>
<dbReference type="SMR" id="Q3YSK9"/>
<dbReference type="FunCoup" id="Q3YSK9">
    <property type="interactions" value="43"/>
</dbReference>
<dbReference type="STRING" id="269484.Ecaj_0249"/>
<dbReference type="KEGG" id="ecn:Ecaj_0249"/>
<dbReference type="eggNOG" id="COG1121">
    <property type="taxonomic scope" value="Bacteria"/>
</dbReference>
<dbReference type="HOGENOM" id="CLU_000604_1_11_5"/>
<dbReference type="InParanoid" id="Q3YSK9"/>
<dbReference type="Proteomes" id="UP000000435">
    <property type="component" value="Chromosome"/>
</dbReference>
<dbReference type="GO" id="GO:0005886">
    <property type="term" value="C:plasma membrane"/>
    <property type="evidence" value="ECO:0007669"/>
    <property type="project" value="UniProtKB-SubCell"/>
</dbReference>
<dbReference type="GO" id="GO:0015633">
    <property type="term" value="F:ABC-type zinc transporter activity"/>
    <property type="evidence" value="ECO:0007669"/>
    <property type="project" value="UniProtKB-EC"/>
</dbReference>
<dbReference type="GO" id="GO:0005524">
    <property type="term" value="F:ATP binding"/>
    <property type="evidence" value="ECO:0007669"/>
    <property type="project" value="UniProtKB-KW"/>
</dbReference>
<dbReference type="GO" id="GO:0016887">
    <property type="term" value="F:ATP hydrolysis activity"/>
    <property type="evidence" value="ECO:0007669"/>
    <property type="project" value="InterPro"/>
</dbReference>
<dbReference type="Gene3D" id="3.40.50.300">
    <property type="entry name" value="P-loop containing nucleotide triphosphate hydrolases"/>
    <property type="match status" value="1"/>
</dbReference>
<dbReference type="InterPro" id="IPR003593">
    <property type="entry name" value="AAA+_ATPase"/>
</dbReference>
<dbReference type="InterPro" id="IPR003439">
    <property type="entry name" value="ABC_transporter-like_ATP-bd"/>
</dbReference>
<dbReference type="InterPro" id="IPR017871">
    <property type="entry name" value="ABC_transporter-like_CS"/>
</dbReference>
<dbReference type="InterPro" id="IPR050153">
    <property type="entry name" value="Metal_Ion_Import_ABC"/>
</dbReference>
<dbReference type="InterPro" id="IPR027417">
    <property type="entry name" value="P-loop_NTPase"/>
</dbReference>
<dbReference type="PANTHER" id="PTHR42734">
    <property type="entry name" value="METAL TRANSPORT SYSTEM ATP-BINDING PROTEIN TM_0124-RELATED"/>
    <property type="match status" value="1"/>
</dbReference>
<dbReference type="PANTHER" id="PTHR42734:SF17">
    <property type="entry name" value="METAL TRANSPORT SYSTEM ATP-BINDING PROTEIN TM_0124-RELATED"/>
    <property type="match status" value="1"/>
</dbReference>
<dbReference type="Pfam" id="PF00005">
    <property type="entry name" value="ABC_tran"/>
    <property type="match status" value="1"/>
</dbReference>
<dbReference type="SMART" id="SM00382">
    <property type="entry name" value="AAA"/>
    <property type="match status" value="1"/>
</dbReference>
<dbReference type="SUPFAM" id="SSF52540">
    <property type="entry name" value="P-loop containing nucleoside triphosphate hydrolases"/>
    <property type="match status" value="1"/>
</dbReference>
<dbReference type="PROSITE" id="PS00211">
    <property type="entry name" value="ABC_TRANSPORTER_1"/>
    <property type="match status" value="1"/>
</dbReference>
<dbReference type="PROSITE" id="PS50893">
    <property type="entry name" value="ABC_TRANSPORTER_2"/>
    <property type="match status" value="1"/>
</dbReference>
<dbReference type="PROSITE" id="PS51298">
    <property type="entry name" value="ZNUC"/>
    <property type="match status" value="1"/>
</dbReference>
<keyword id="KW-0067">ATP-binding</keyword>
<keyword id="KW-0997">Cell inner membrane</keyword>
<keyword id="KW-1003">Cell membrane</keyword>
<keyword id="KW-0406">Ion transport</keyword>
<keyword id="KW-0472">Membrane</keyword>
<keyword id="KW-0547">Nucleotide-binding</keyword>
<keyword id="KW-1278">Translocase</keyword>
<keyword id="KW-0813">Transport</keyword>
<keyword id="KW-0862">Zinc</keyword>
<keyword id="KW-0864">Zinc transport</keyword>
<feature type="chain" id="PRO_0000281500" description="Zinc import ATP-binding protein ZnuC">
    <location>
        <begin position="1"/>
        <end position="242"/>
    </location>
</feature>
<feature type="domain" description="ABC transporter" evidence="1">
    <location>
        <begin position="24"/>
        <end position="241"/>
    </location>
</feature>
<feature type="binding site" evidence="1">
    <location>
        <begin position="56"/>
        <end position="63"/>
    </location>
    <ligand>
        <name>ATP</name>
        <dbReference type="ChEBI" id="CHEBI:30616"/>
    </ligand>
</feature>
<gene>
    <name evidence="1" type="primary">znuC</name>
    <name type="ordered locus">Ecaj_0249</name>
</gene>
<evidence type="ECO:0000255" key="1">
    <source>
        <dbReference type="HAMAP-Rule" id="MF_01725"/>
    </source>
</evidence>
<evidence type="ECO:0000305" key="2"/>
<name>ZNUC_EHRCJ</name>
<sequence>MFHRLLNKSKILACDDKSVNDYIINVKNLSFFYSKKKVIDNISFRVKFGEIITILGPNGGGKTTLIRILVGIYKNYVGLVEYAKDFTIGYLPQHFSVNSLIPMTVEYFLNSSYTNRKRKLGVGDVLKDVNIEKILDRQMSEISYGELQLVLLARCLMLNPDLIILDEPVSCMDINAKNSFYKLINKLISIYNLSVIMTSHDLHFVMSNSYRVICINKSVYCEGSPSEIVKNEKFLKMFSSYA</sequence>
<proteinExistence type="inferred from homology"/>